<sequence>MASVAELKEKHAAATASVNSLRERLRQRRQMLLDTDVERYSRTQGRTPVSFNPTDLVCCRTLQGHSGKVYSLDWTPEKNWIVSASQDGRLIVWNALTSQKTHAIKLHCPWVMTCAFAPNGQSVACGGLDSACSIFNLNSQADRDGNIPVSRILTGHKGYVSSCQYVPDQETRLITSSGDQTCVLWDVTTGQRISIFGGEFPSGHTADVLSLSINSSISNMFVSGSCDATVRLWDIRIASRAVRTYHGHEGDINSVKFFPDGQRFGTGSDDGTCRLFDVRTGHQLQVYSREPDRNDNELPTVTSIAFSISGRLLFAGYSNGDCYVWDTLLAEVVLNLGNLQNSHEGRISCLGLSSDGSALCTGSWDKNLKIWAFSGHRKIV</sequence>
<evidence type="ECO:0000250" key="1">
    <source>
        <dbReference type="UniProtKB" id="Q40687"/>
    </source>
</evidence>
<evidence type="ECO:0000255" key="2"/>
<evidence type="ECO:0000303" key="3">
    <source>
    </source>
</evidence>
<evidence type="ECO:0000305" key="4"/>
<evidence type="ECO:0000312" key="5">
    <source>
        <dbReference type="EMBL" id="EEC75892.1"/>
    </source>
</evidence>
<organism>
    <name type="scientific">Oryza sativa subsp. indica</name>
    <name type="common">Rice</name>
    <dbReference type="NCBI Taxonomy" id="39946"/>
    <lineage>
        <taxon>Eukaryota</taxon>
        <taxon>Viridiplantae</taxon>
        <taxon>Streptophyta</taxon>
        <taxon>Embryophyta</taxon>
        <taxon>Tracheophyta</taxon>
        <taxon>Spermatophyta</taxon>
        <taxon>Magnoliopsida</taxon>
        <taxon>Liliopsida</taxon>
        <taxon>Poales</taxon>
        <taxon>Poaceae</taxon>
        <taxon>BOP clade</taxon>
        <taxon>Oryzoideae</taxon>
        <taxon>Oryzeae</taxon>
        <taxon>Oryzinae</taxon>
        <taxon>Oryza</taxon>
        <taxon>Oryza sativa</taxon>
    </lineage>
</organism>
<name>GBB_ORYSI</name>
<dbReference type="EMBL" id="HM768320">
    <property type="protein sequence ID" value="ADL27745.1"/>
    <property type="molecule type" value="mRNA"/>
</dbReference>
<dbReference type="EMBL" id="CM000128">
    <property type="protein sequence ID" value="EEC75892.1"/>
    <property type="molecule type" value="Genomic_DNA"/>
</dbReference>
<dbReference type="SMR" id="B8AP31"/>
<dbReference type="STRING" id="39946.B8AP31"/>
<dbReference type="EnsemblPlants" id="BGIOSGA010086-TA">
    <property type="protein sequence ID" value="BGIOSGA010086-PA"/>
    <property type="gene ID" value="BGIOSGA010086"/>
</dbReference>
<dbReference type="EnsemblPlants" id="OsGoSa_03g0029050.01">
    <property type="protein sequence ID" value="OsGoSa_03g0029050.01"/>
    <property type="gene ID" value="OsGoSa_03g0029050"/>
</dbReference>
<dbReference type="EnsemblPlants" id="OsIR64_03g0028630.01">
    <property type="protein sequence ID" value="OsIR64_03g0028630.01"/>
    <property type="gene ID" value="OsIR64_03g0028630"/>
</dbReference>
<dbReference type="EnsemblPlants" id="OsMH63_03G029040_01">
    <property type="protein sequence ID" value="OsMH63_03G029040_01"/>
    <property type="gene ID" value="OsMH63_03G029040"/>
</dbReference>
<dbReference type="EnsemblPlants" id="OsPr106_03g0028920.01">
    <property type="protein sequence ID" value="OsPr106_03g0028920.01"/>
    <property type="gene ID" value="OsPr106_03g0028920"/>
</dbReference>
<dbReference type="Gramene" id="BGIOSGA010086-TA">
    <property type="protein sequence ID" value="BGIOSGA010086-PA"/>
    <property type="gene ID" value="BGIOSGA010086"/>
</dbReference>
<dbReference type="Gramene" id="OsGoSa_03g0029050.01">
    <property type="protein sequence ID" value="OsGoSa_03g0029050.01"/>
    <property type="gene ID" value="OsGoSa_03g0029050"/>
</dbReference>
<dbReference type="Gramene" id="OsIR64_03g0028630.01">
    <property type="protein sequence ID" value="OsIR64_03g0028630.01"/>
    <property type="gene ID" value="OsIR64_03g0028630"/>
</dbReference>
<dbReference type="Gramene" id="OsMH63_03G029040_01">
    <property type="protein sequence ID" value="OsMH63_03G029040_01"/>
    <property type="gene ID" value="OsMH63_03G029040"/>
</dbReference>
<dbReference type="Gramene" id="OsPr106_03g0028920.01">
    <property type="protein sequence ID" value="OsPr106_03g0028920.01"/>
    <property type="gene ID" value="OsPr106_03g0028920"/>
</dbReference>
<dbReference type="HOGENOM" id="CLU_000288_57_34_1"/>
<dbReference type="OMA" id="PLDSQWV"/>
<dbReference type="OrthoDB" id="10255630at2759"/>
<dbReference type="Proteomes" id="UP000007015">
    <property type="component" value="Chromosome 3"/>
</dbReference>
<dbReference type="GO" id="GO:0080008">
    <property type="term" value="C:Cul4-RING E3 ubiquitin ligase complex"/>
    <property type="evidence" value="ECO:0007669"/>
    <property type="project" value="EnsemblPlants"/>
</dbReference>
<dbReference type="GO" id="GO:0005783">
    <property type="term" value="C:endoplasmic reticulum"/>
    <property type="evidence" value="ECO:0007669"/>
    <property type="project" value="EnsemblPlants"/>
</dbReference>
<dbReference type="GO" id="GO:0005834">
    <property type="term" value="C:heterotrimeric G-protein complex"/>
    <property type="evidence" value="ECO:0007669"/>
    <property type="project" value="EnsemblPlants"/>
</dbReference>
<dbReference type="GO" id="GO:0050832">
    <property type="term" value="P:defense response to fungus"/>
    <property type="evidence" value="ECO:0007669"/>
    <property type="project" value="EnsemblPlants"/>
</dbReference>
<dbReference type="GO" id="GO:0030968">
    <property type="term" value="P:endoplasmic reticulum unfolded protein response"/>
    <property type="evidence" value="ECO:0007669"/>
    <property type="project" value="EnsemblPlants"/>
</dbReference>
<dbReference type="GO" id="GO:0010154">
    <property type="term" value="P:fruit development"/>
    <property type="evidence" value="ECO:0007669"/>
    <property type="project" value="EnsemblPlants"/>
</dbReference>
<dbReference type="GO" id="GO:0007186">
    <property type="term" value="P:G protein-coupled receptor signaling pathway"/>
    <property type="evidence" value="ECO:0007669"/>
    <property type="project" value="EnsemblPlants"/>
</dbReference>
<dbReference type="GO" id="GO:0009867">
    <property type="term" value="P:jasmonic acid mediated signaling pathway"/>
    <property type="evidence" value="ECO:0007669"/>
    <property type="project" value="EnsemblPlants"/>
</dbReference>
<dbReference type="GO" id="GO:0048527">
    <property type="term" value="P:lateral root development"/>
    <property type="evidence" value="ECO:0007669"/>
    <property type="project" value="EnsemblPlants"/>
</dbReference>
<dbReference type="GO" id="GO:1905392">
    <property type="term" value="P:plant organ morphogenesis"/>
    <property type="evidence" value="ECO:0007669"/>
    <property type="project" value="EnsemblPlants"/>
</dbReference>
<dbReference type="GO" id="GO:0072593">
    <property type="term" value="P:reactive oxygen species metabolic process"/>
    <property type="evidence" value="ECO:0007669"/>
    <property type="project" value="EnsemblPlants"/>
</dbReference>
<dbReference type="GO" id="GO:2000280">
    <property type="term" value="P:regulation of root development"/>
    <property type="evidence" value="ECO:0007669"/>
    <property type="project" value="EnsemblPlants"/>
</dbReference>
<dbReference type="GO" id="GO:0009723">
    <property type="term" value="P:response to ethylene"/>
    <property type="evidence" value="ECO:0007669"/>
    <property type="project" value="EnsemblPlants"/>
</dbReference>
<dbReference type="GO" id="GO:0009845">
    <property type="term" value="P:seed germination"/>
    <property type="evidence" value="ECO:0007669"/>
    <property type="project" value="EnsemblPlants"/>
</dbReference>
<dbReference type="GO" id="GO:0010118">
    <property type="term" value="P:stomatal movement"/>
    <property type="evidence" value="ECO:0007669"/>
    <property type="project" value="EnsemblPlants"/>
</dbReference>
<dbReference type="CDD" id="cd00200">
    <property type="entry name" value="WD40"/>
    <property type="match status" value="1"/>
</dbReference>
<dbReference type="FunFam" id="2.130.10.10:FF:000580">
    <property type="entry name" value="Guanine nucleotide-binding protein subunit beta"/>
    <property type="match status" value="1"/>
</dbReference>
<dbReference type="Gene3D" id="2.130.10.10">
    <property type="entry name" value="YVTN repeat-like/Quinoprotein amine dehydrogenase"/>
    <property type="match status" value="1"/>
</dbReference>
<dbReference type="InterPro" id="IPR020472">
    <property type="entry name" value="G-protein_beta_WD-40_rep"/>
</dbReference>
<dbReference type="InterPro" id="IPR001632">
    <property type="entry name" value="Gprotein_B"/>
</dbReference>
<dbReference type="InterPro" id="IPR016346">
    <property type="entry name" value="Guanine_nucleotide-bd_bsu"/>
</dbReference>
<dbReference type="InterPro" id="IPR015943">
    <property type="entry name" value="WD40/YVTN_repeat-like_dom_sf"/>
</dbReference>
<dbReference type="InterPro" id="IPR019775">
    <property type="entry name" value="WD40_repeat_CS"/>
</dbReference>
<dbReference type="InterPro" id="IPR036322">
    <property type="entry name" value="WD40_repeat_dom_sf"/>
</dbReference>
<dbReference type="InterPro" id="IPR001680">
    <property type="entry name" value="WD40_rpt"/>
</dbReference>
<dbReference type="PANTHER" id="PTHR19850">
    <property type="entry name" value="GUANINE NUCLEOTIDE-BINDING PROTEIN BETA G PROTEIN BETA"/>
    <property type="match status" value="1"/>
</dbReference>
<dbReference type="Pfam" id="PF25391">
    <property type="entry name" value="WD40_Gbeta"/>
    <property type="match status" value="1"/>
</dbReference>
<dbReference type="PIRSF" id="PIRSF002394">
    <property type="entry name" value="GN-bd_beta"/>
    <property type="match status" value="1"/>
</dbReference>
<dbReference type="PRINTS" id="PR00319">
    <property type="entry name" value="GPROTEINB"/>
</dbReference>
<dbReference type="PRINTS" id="PR00320">
    <property type="entry name" value="GPROTEINBRPT"/>
</dbReference>
<dbReference type="SMART" id="SM00320">
    <property type="entry name" value="WD40"/>
    <property type="match status" value="7"/>
</dbReference>
<dbReference type="SUPFAM" id="SSF50978">
    <property type="entry name" value="WD40 repeat-like"/>
    <property type="match status" value="1"/>
</dbReference>
<dbReference type="PROSITE" id="PS00678">
    <property type="entry name" value="WD_REPEATS_1"/>
    <property type="match status" value="3"/>
</dbReference>
<dbReference type="PROSITE" id="PS50082">
    <property type="entry name" value="WD_REPEATS_2"/>
    <property type="match status" value="5"/>
</dbReference>
<dbReference type="PROSITE" id="PS50294">
    <property type="entry name" value="WD_REPEATS_REGION"/>
    <property type="match status" value="1"/>
</dbReference>
<protein>
    <recommendedName>
        <fullName evidence="4">Guanine nucleotide-binding protein subunit beta</fullName>
    </recommendedName>
    <alternativeName>
        <fullName evidence="3">WD40 repeat-containing protein 80</fullName>
        <shortName evidence="3">OsWD40-80</shortName>
    </alternativeName>
</protein>
<proteinExistence type="evidence at transcript level"/>
<keyword id="KW-1003">Cell membrane</keyword>
<keyword id="KW-0472">Membrane</keyword>
<keyword id="KW-1185">Reference proteome</keyword>
<keyword id="KW-0677">Repeat</keyword>
<keyword id="KW-0807">Transducer</keyword>
<keyword id="KW-0853">WD repeat</keyword>
<comment type="function">
    <text evidence="1">Guanine nucleotide-binding proteins (G proteins) are involved as modulators or transducers in various transmembrane signaling systems. The beta and gamma chains are required for the GTPase activity, for replacement of GDP by GTP, and for G protein-effector interaction.</text>
</comment>
<comment type="subunit">
    <text evidence="1">G proteins are composed of 3 units, alpha, beta and gamma. Interacts with the gamma subunits RGG1 and RGG2.</text>
</comment>
<comment type="subcellular location">
    <subcellularLocation>
        <location evidence="1">Cell membrane</location>
    </subcellularLocation>
</comment>
<comment type="similarity">
    <text evidence="4">Belongs to the WD repeat G protein beta family.</text>
</comment>
<accession>B8AP31</accession>
<accession>E0AEC9</accession>
<gene>
    <name evidence="4" type="primary">RGBB</name>
    <name evidence="5" type="ORF">OsI_12941</name>
</gene>
<feature type="chain" id="PRO_0000432815" description="Guanine nucleotide-binding protein subunit beta">
    <location>
        <begin position="1"/>
        <end position="380"/>
    </location>
</feature>
<feature type="repeat" description="WD 1" evidence="2">
    <location>
        <begin position="64"/>
        <end position="103"/>
    </location>
</feature>
<feature type="repeat" description="WD 2" evidence="2">
    <location>
        <begin position="106"/>
        <end position="145"/>
    </location>
</feature>
<feature type="repeat" description="WD 3" evidence="2">
    <location>
        <begin position="155"/>
        <end position="195"/>
    </location>
</feature>
<feature type="repeat" description="WD 4" evidence="2">
    <location>
        <begin position="203"/>
        <end position="243"/>
    </location>
</feature>
<feature type="repeat" description="WD 5" evidence="2">
    <location>
        <begin position="247"/>
        <end position="286"/>
    </location>
</feature>
<feature type="repeat" description="WD 6" evidence="2">
    <location>
        <begin position="296"/>
        <end position="335"/>
    </location>
</feature>
<feature type="repeat" description="WD 7" evidence="2">
    <location>
        <begin position="342"/>
        <end position="380"/>
    </location>
</feature>
<feature type="sequence conflict" description="In Ref. 1; ADL27745." evidence="4" ref="1">
    <original>L</original>
    <variation>P</variation>
    <location>
        <position position="62"/>
    </location>
</feature>
<reference key="1">
    <citation type="submission" date="2010-07" db="EMBL/GenBank/DDBJ databases">
        <title>Isolation, cloning and characterization of beta subunit of G protein heterotrimer complex from Oryza sativa cultivar indica, Swarna.</title>
        <authorList>
            <person name="Yadav D.K."/>
            <person name="Tuteja N."/>
        </authorList>
    </citation>
    <scope>NUCLEOTIDE SEQUENCE [MRNA]</scope>
    <source>
        <strain>cv. Swarna</strain>
    </source>
</reference>
<reference key="2">
    <citation type="journal article" date="2005" name="PLoS Biol.">
        <title>The genomes of Oryza sativa: a history of duplications.</title>
        <authorList>
            <person name="Yu J."/>
            <person name="Wang J."/>
            <person name="Lin W."/>
            <person name="Li S."/>
            <person name="Li H."/>
            <person name="Zhou J."/>
            <person name="Ni P."/>
            <person name="Dong W."/>
            <person name="Hu S."/>
            <person name="Zeng C."/>
            <person name="Zhang J."/>
            <person name="Zhang Y."/>
            <person name="Li R."/>
            <person name="Xu Z."/>
            <person name="Li S."/>
            <person name="Li X."/>
            <person name="Zheng H."/>
            <person name="Cong L."/>
            <person name="Lin L."/>
            <person name="Yin J."/>
            <person name="Geng J."/>
            <person name="Li G."/>
            <person name="Shi J."/>
            <person name="Liu J."/>
            <person name="Lv H."/>
            <person name="Li J."/>
            <person name="Wang J."/>
            <person name="Deng Y."/>
            <person name="Ran L."/>
            <person name="Shi X."/>
            <person name="Wang X."/>
            <person name="Wu Q."/>
            <person name="Li C."/>
            <person name="Ren X."/>
            <person name="Wang J."/>
            <person name="Wang X."/>
            <person name="Li D."/>
            <person name="Liu D."/>
            <person name="Zhang X."/>
            <person name="Ji Z."/>
            <person name="Zhao W."/>
            <person name="Sun Y."/>
            <person name="Zhang Z."/>
            <person name="Bao J."/>
            <person name="Han Y."/>
            <person name="Dong L."/>
            <person name="Ji J."/>
            <person name="Chen P."/>
            <person name="Wu S."/>
            <person name="Liu J."/>
            <person name="Xiao Y."/>
            <person name="Bu D."/>
            <person name="Tan J."/>
            <person name="Yang L."/>
            <person name="Ye C."/>
            <person name="Zhang J."/>
            <person name="Xu J."/>
            <person name="Zhou Y."/>
            <person name="Yu Y."/>
            <person name="Zhang B."/>
            <person name="Zhuang S."/>
            <person name="Wei H."/>
            <person name="Liu B."/>
            <person name="Lei M."/>
            <person name="Yu H."/>
            <person name="Li Y."/>
            <person name="Xu H."/>
            <person name="Wei S."/>
            <person name="He X."/>
            <person name="Fang L."/>
            <person name="Zhang Z."/>
            <person name="Zhang Y."/>
            <person name="Huang X."/>
            <person name="Su Z."/>
            <person name="Tong W."/>
            <person name="Li J."/>
            <person name="Tong Z."/>
            <person name="Li S."/>
            <person name="Ye J."/>
            <person name="Wang L."/>
            <person name="Fang L."/>
            <person name="Lei T."/>
            <person name="Chen C.-S."/>
            <person name="Chen H.-C."/>
            <person name="Xu Z."/>
            <person name="Li H."/>
            <person name="Huang H."/>
            <person name="Zhang F."/>
            <person name="Xu H."/>
            <person name="Li N."/>
            <person name="Zhao C."/>
            <person name="Li S."/>
            <person name="Dong L."/>
            <person name="Huang Y."/>
            <person name="Li L."/>
            <person name="Xi Y."/>
            <person name="Qi Q."/>
            <person name="Li W."/>
            <person name="Zhang B."/>
            <person name="Hu W."/>
            <person name="Zhang Y."/>
            <person name="Tian X."/>
            <person name="Jiao Y."/>
            <person name="Liang X."/>
            <person name="Jin J."/>
            <person name="Gao L."/>
            <person name="Zheng W."/>
            <person name="Hao B."/>
            <person name="Liu S.-M."/>
            <person name="Wang W."/>
            <person name="Yuan L."/>
            <person name="Cao M."/>
            <person name="McDermott J."/>
            <person name="Samudrala R."/>
            <person name="Wang J."/>
            <person name="Wong G.K.-S."/>
            <person name="Yang H."/>
        </authorList>
    </citation>
    <scope>NUCLEOTIDE SEQUENCE [LARGE SCALE GENOMIC DNA]</scope>
    <source>
        <strain>cv. 93-11</strain>
    </source>
</reference>
<reference key="3">
    <citation type="journal article" date="2012" name="BMC Genomics">
        <title>Genomic survey, expression profile and co-expression network analysis of OsWD40 family in rice.</title>
        <authorList>
            <person name="Ouyang Y."/>
            <person name="Huang X."/>
            <person name="Lu Z."/>
            <person name="Yao J."/>
        </authorList>
    </citation>
    <scope>GENE FAMILY</scope>
    <scope>NOMENCLATURE</scope>
</reference>